<protein>
    <recommendedName>
        <fullName evidence="1">Urease subunit gamma</fullName>
        <ecNumber evidence="1">3.5.1.5</ecNumber>
    </recommendedName>
    <alternativeName>
        <fullName evidence="1">Urea amidohydrolase subunit gamma</fullName>
    </alternativeName>
</protein>
<evidence type="ECO:0000255" key="1">
    <source>
        <dbReference type="HAMAP-Rule" id="MF_00739"/>
    </source>
</evidence>
<proteinExistence type="inferred from homology"/>
<organism>
    <name type="scientific">Prochlorococcus marinus (strain NATL2A)</name>
    <dbReference type="NCBI Taxonomy" id="59920"/>
    <lineage>
        <taxon>Bacteria</taxon>
        <taxon>Bacillati</taxon>
        <taxon>Cyanobacteriota</taxon>
        <taxon>Cyanophyceae</taxon>
        <taxon>Synechococcales</taxon>
        <taxon>Prochlorococcaceae</taxon>
        <taxon>Prochlorococcus</taxon>
    </lineage>
</organism>
<accession>Q46IY5</accession>
<sequence length="100" mass="11149">MYLSPQEKDKLLVVTAALLAERRLNRGLKLNHPEAVAWLSFQVLEGARDGKSVSTLMNEGTTWLTKEQVMEGVPELIHEVQIEAVFPDGTKLVTLHNPIS</sequence>
<comment type="catalytic activity">
    <reaction evidence="1">
        <text>urea + 2 H2O + H(+) = hydrogencarbonate + 2 NH4(+)</text>
        <dbReference type="Rhea" id="RHEA:20557"/>
        <dbReference type="ChEBI" id="CHEBI:15377"/>
        <dbReference type="ChEBI" id="CHEBI:15378"/>
        <dbReference type="ChEBI" id="CHEBI:16199"/>
        <dbReference type="ChEBI" id="CHEBI:17544"/>
        <dbReference type="ChEBI" id="CHEBI:28938"/>
        <dbReference type="EC" id="3.5.1.5"/>
    </reaction>
</comment>
<comment type="pathway">
    <text evidence="1">Nitrogen metabolism; urea degradation; CO(2) and NH(3) from urea (urease route): step 1/1.</text>
</comment>
<comment type="subunit">
    <text evidence="1">Heterotrimer of UreA (gamma), UreB (beta) and UreC (alpha) subunits. Three heterotrimers associate to form the active enzyme.</text>
</comment>
<comment type="subcellular location">
    <subcellularLocation>
        <location evidence="1">Cytoplasm</location>
    </subcellularLocation>
</comment>
<comment type="similarity">
    <text evidence="1">Belongs to the urease gamma subunit family.</text>
</comment>
<dbReference type="EC" id="3.5.1.5" evidence="1"/>
<dbReference type="EMBL" id="CP000095">
    <property type="protein sequence ID" value="AAZ58543.1"/>
    <property type="molecule type" value="Genomic_DNA"/>
</dbReference>
<dbReference type="RefSeq" id="WP_011295398.1">
    <property type="nucleotide sequence ID" value="NC_007335.2"/>
</dbReference>
<dbReference type="SMR" id="Q46IY5"/>
<dbReference type="STRING" id="59920.PMN2A_1053"/>
<dbReference type="KEGG" id="pmn:PMN2A_1053"/>
<dbReference type="HOGENOM" id="CLU_145825_1_0_3"/>
<dbReference type="OrthoDB" id="9793527at2"/>
<dbReference type="PhylomeDB" id="Q46IY5"/>
<dbReference type="UniPathway" id="UPA00258">
    <property type="reaction ID" value="UER00370"/>
</dbReference>
<dbReference type="Proteomes" id="UP000002535">
    <property type="component" value="Chromosome"/>
</dbReference>
<dbReference type="GO" id="GO:0005737">
    <property type="term" value="C:cytoplasm"/>
    <property type="evidence" value="ECO:0007669"/>
    <property type="project" value="UniProtKB-SubCell"/>
</dbReference>
<dbReference type="GO" id="GO:0016151">
    <property type="term" value="F:nickel cation binding"/>
    <property type="evidence" value="ECO:0007669"/>
    <property type="project" value="InterPro"/>
</dbReference>
<dbReference type="GO" id="GO:0009039">
    <property type="term" value="F:urease activity"/>
    <property type="evidence" value="ECO:0007669"/>
    <property type="project" value="UniProtKB-UniRule"/>
</dbReference>
<dbReference type="GO" id="GO:0043419">
    <property type="term" value="P:urea catabolic process"/>
    <property type="evidence" value="ECO:0007669"/>
    <property type="project" value="UniProtKB-UniRule"/>
</dbReference>
<dbReference type="CDD" id="cd00390">
    <property type="entry name" value="Urease_gamma"/>
    <property type="match status" value="1"/>
</dbReference>
<dbReference type="Gene3D" id="3.30.280.10">
    <property type="entry name" value="Urease, gamma-like subunit"/>
    <property type="match status" value="1"/>
</dbReference>
<dbReference type="HAMAP" id="MF_00739">
    <property type="entry name" value="Urease_gamma"/>
    <property type="match status" value="1"/>
</dbReference>
<dbReference type="InterPro" id="IPR012010">
    <property type="entry name" value="Urease_gamma"/>
</dbReference>
<dbReference type="InterPro" id="IPR002026">
    <property type="entry name" value="Urease_gamma/gamma-beta_su"/>
</dbReference>
<dbReference type="InterPro" id="IPR036463">
    <property type="entry name" value="Urease_gamma_sf"/>
</dbReference>
<dbReference type="InterPro" id="IPR050069">
    <property type="entry name" value="Urease_subunit"/>
</dbReference>
<dbReference type="NCBIfam" id="NF009712">
    <property type="entry name" value="PRK13241.1"/>
    <property type="match status" value="1"/>
</dbReference>
<dbReference type="NCBIfam" id="TIGR00193">
    <property type="entry name" value="urease_gam"/>
    <property type="match status" value="1"/>
</dbReference>
<dbReference type="PANTHER" id="PTHR33569">
    <property type="entry name" value="UREASE"/>
    <property type="match status" value="1"/>
</dbReference>
<dbReference type="PANTHER" id="PTHR33569:SF1">
    <property type="entry name" value="UREASE"/>
    <property type="match status" value="1"/>
</dbReference>
<dbReference type="Pfam" id="PF00547">
    <property type="entry name" value="Urease_gamma"/>
    <property type="match status" value="1"/>
</dbReference>
<dbReference type="PIRSF" id="PIRSF001223">
    <property type="entry name" value="Urease_gamma"/>
    <property type="match status" value="1"/>
</dbReference>
<dbReference type="SUPFAM" id="SSF54111">
    <property type="entry name" value="Urease, gamma-subunit"/>
    <property type="match status" value="1"/>
</dbReference>
<gene>
    <name evidence="1" type="primary">ureA</name>
    <name type="ordered locus">PMN2A_1053</name>
</gene>
<name>URE3_PROMT</name>
<feature type="chain" id="PRO_0000234208" description="Urease subunit gamma">
    <location>
        <begin position="1"/>
        <end position="100"/>
    </location>
</feature>
<reference key="1">
    <citation type="journal article" date="2007" name="PLoS Genet.">
        <title>Patterns and implications of gene gain and loss in the evolution of Prochlorococcus.</title>
        <authorList>
            <person name="Kettler G.C."/>
            <person name="Martiny A.C."/>
            <person name="Huang K."/>
            <person name="Zucker J."/>
            <person name="Coleman M.L."/>
            <person name="Rodrigue S."/>
            <person name="Chen F."/>
            <person name="Lapidus A."/>
            <person name="Ferriera S."/>
            <person name="Johnson J."/>
            <person name="Steglich C."/>
            <person name="Church G.M."/>
            <person name="Richardson P."/>
            <person name="Chisholm S.W."/>
        </authorList>
    </citation>
    <scope>NUCLEOTIDE SEQUENCE [LARGE SCALE GENOMIC DNA]</scope>
    <source>
        <strain>NATL2A</strain>
    </source>
</reference>
<keyword id="KW-0963">Cytoplasm</keyword>
<keyword id="KW-0378">Hydrolase</keyword>
<keyword id="KW-1185">Reference proteome</keyword>